<reference key="1">
    <citation type="submission" date="2005-08" db="EMBL/GenBank/DDBJ databases">
        <title>Complete sequence of Synechococcus sp. CC9902.</title>
        <authorList>
            <person name="Copeland A."/>
            <person name="Lucas S."/>
            <person name="Lapidus A."/>
            <person name="Barry K."/>
            <person name="Detter J.C."/>
            <person name="Glavina T."/>
            <person name="Hammon N."/>
            <person name="Israni S."/>
            <person name="Pitluck S."/>
            <person name="Martinez M."/>
            <person name="Schmutz J."/>
            <person name="Larimer F."/>
            <person name="Land M."/>
            <person name="Kyrpides N."/>
            <person name="Ivanova N."/>
            <person name="Richardson P."/>
        </authorList>
    </citation>
    <scope>NUCLEOTIDE SEQUENCE [LARGE SCALE GENOMIC DNA]</scope>
    <source>
        <strain>CC9902</strain>
    </source>
</reference>
<accession>Q3AUM0</accession>
<sequence>MTSPFLQRHLGPSETEQHQMLQTLGYQHLDDFIKDVVPDDILDAAPPRNVLPAGCGEAEALADLGTIAAKNLVQRSLIGLGYHGTATPALIQRHVFENPAWYTAYTPYQAEIAQGRLEALLNFQTLISELTGLPIANASLLDEATAAAEAMGLSFGVCRRPEANRFLVDCHVLPQTWAVLQTRAEPLGIELERVDPEQMAFDTRVFGVLLQLPGADGLLWDPTTLIERAHDAGALVTVAIDPLAQTLFAPVADFGADIAVGSAQRFGVPMGFGGPHAAFFATREAYKRQIPGRLVGESKDAEGNPALRLALQTREQHIRRDKATSNICTAQVLLAVIASFYAVHHGPDGLRAIAERLVGLRLQFEAGLRTLDVAVEEADRFDTVTVTTTHAPAVHAAAAEAGFNLRVLPDGVPASQATGFGVSFDEFSDQKEVAHLLEAVARAVGKPVSTAPASAANTALLSLPSRIRPWLTQPAFHRYRSETELMRYIQRLVSRDLSLVHGMIPLGSCTMKLNAAAELLPVSWPEFARLHPFAPLDQALGYRHLADDLERWLAALTGFAAVSLQPNAGSQGEYAGLLVIRAWHRSRGDNHRDICLIPTSAHGTNPASAVMAGLKVVAVACDAEGNIDQDDLAARATEYADRLAALMVTYPSTHGVFETGIRHICEVVHRHGGQVYLDGANLNAQVGLSRPGAFGADVCHLNLHKTFCIPHGGGGPGVGPIGVAAHLAPFLPGHPFENQTASAIGPVSAAALGSASILPISWMYLRMMGADALRQASAVALLSANYLAHRLDDHFPVLFRGATGRVAHECILDLRPLKRDAGIDVDDIAKRLMDYGFHAPTVSWPVAGTVMVEPTESESLSELDRFADALIAIRDEVRAIETGAMDALNNPLKRAPHTMAAVMAEVWDRPYSRQQAAFPLPDQTQNKVWPAVARIDNAFGDRNLICTCPSVEAVAIAA</sequence>
<protein>
    <recommendedName>
        <fullName evidence="1">Glycine dehydrogenase (decarboxylating)</fullName>
        <ecNumber evidence="1">1.4.4.2</ecNumber>
    </recommendedName>
    <alternativeName>
        <fullName evidence="1">Glycine cleavage system P-protein</fullName>
    </alternativeName>
    <alternativeName>
        <fullName evidence="1">Glycine decarboxylase</fullName>
    </alternativeName>
    <alternativeName>
        <fullName evidence="1">Glycine dehydrogenase (aminomethyl-transferring)</fullName>
    </alternativeName>
</protein>
<keyword id="KW-0560">Oxidoreductase</keyword>
<keyword id="KW-0663">Pyridoxal phosphate</keyword>
<keyword id="KW-1185">Reference proteome</keyword>
<organism>
    <name type="scientific">Synechococcus sp. (strain CC9902)</name>
    <dbReference type="NCBI Taxonomy" id="316279"/>
    <lineage>
        <taxon>Bacteria</taxon>
        <taxon>Bacillati</taxon>
        <taxon>Cyanobacteriota</taxon>
        <taxon>Cyanophyceae</taxon>
        <taxon>Synechococcales</taxon>
        <taxon>Synechococcaceae</taxon>
        <taxon>Synechococcus</taxon>
    </lineage>
</organism>
<dbReference type="EC" id="1.4.4.2" evidence="1"/>
<dbReference type="EMBL" id="CP000097">
    <property type="protein sequence ID" value="ABB27146.1"/>
    <property type="molecule type" value="Genomic_DNA"/>
</dbReference>
<dbReference type="RefSeq" id="WP_011360925.1">
    <property type="nucleotide sequence ID" value="NC_007513.1"/>
</dbReference>
<dbReference type="SMR" id="Q3AUM0"/>
<dbReference type="STRING" id="316279.Syncc9902_2188"/>
<dbReference type="KEGG" id="sye:Syncc9902_2188"/>
<dbReference type="eggNOG" id="COG0403">
    <property type="taxonomic scope" value="Bacteria"/>
</dbReference>
<dbReference type="eggNOG" id="COG1003">
    <property type="taxonomic scope" value="Bacteria"/>
</dbReference>
<dbReference type="HOGENOM" id="CLU_004620_3_0_3"/>
<dbReference type="OrthoDB" id="9801272at2"/>
<dbReference type="Proteomes" id="UP000002712">
    <property type="component" value="Chromosome"/>
</dbReference>
<dbReference type="GO" id="GO:0005829">
    <property type="term" value="C:cytosol"/>
    <property type="evidence" value="ECO:0007669"/>
    <property type="project" value="TreeGrafter"/>
</dbReference>
<dbReference type="GO" id="GO:0005960">
    <property type="term" value="C:glycine cleavage complex"/>
    <property type="evidence" value="ECO:0007669"/>
    <property type="project" value="TreeGrafter"/>
</dbReference>
<dbReference type="GO" id="GO:0016594">
    <property type="term" value="F:glycine binding"/>
    <property type="evidence" value="ECO:0007669"/>
    <property type="project" value="TreeGrafter"/>
</dbReference>
<dbReference type="GO" id="GO:0004375">
    <property type="term" value="F:glycine dehydrogenase (decarboxylating) activity"/>
    <property type="evidence" value="ECO:0007669"/>
    <property type="project" value="UniProtKB-EC"/>
</dbReference>
<dbReference type="GO" id="GO:0030170">
    <property type="term" value="F:pyridoxal phosphate binding"/>
    <property type="evidence" value="ECO:0007669"/>
    <property type="project" value="TreeGrafter"/>
</dbReference>
<dbReference type="GO" id="GO:0019464">
    <property type="term" value="P:glycine decarboxylation via glycine cleavage system"/>
    <property type="evidence" value="ECO:0007669"/>
    <property type="project" value="UniProtKB-UniRule"/>
</dbReference>
<dbReference type="CDD" id="cd00613">
    <property type="entry name" value="GDC-P"/>
    <property type="match status" value="1"/>
</dbReference>
<dbReference type="FunFam" id="3.40.640.10:FF:000005">
    <property type="entry name" value="Glycine dehydrogenase (decarboxylating), mitochondrial"/>
    <property type="match status" value="1"/>
</dbReference>
<dbReference type="FunFam" id="3.90.1150.10:FF:000007">
    <property type="entry name" value="Glycine dehydrogenase (decarboxylating), mitochondrial"/>
    <property type="match status" value="1"/>
</dbReference>
<dbReference type="FunFam" id="3.40.640.10:FF:000007">
    <property type="entry name" value="glycine dehydrogenase (Decarboxylating), mitochondrial"/>
    <property type="match status" value="1"/>
</dbReference>
<dbReference type="Gene3D" id="3.90.1150.10">
    <property type="entry name" value="Aspartate Aminotransferase, domain 1"/>
    <property type="match status" value="2"/>
</dbReference>
<dbReference type="Gene3D" id="3.40.640.10">
    <property type="entry name" value="Type I PLP-dependent aspartate aminotransferase-like (Major domain)"/>
    <property type="match status" value="2"/>
</dbReference>
<dbReference type="HAMAP" id="MF_00711">
    <property type="entry name" value="GcvP"/>
    <property type="match status" value="1"/>
</dbReference>
<dbReference type="InterPro" id="IPR003437">
    <property type="entry name" value="GcvP"/>
</dbReference>
<dbReference type="InterPro" id="IPR049316">
    <property type="entry name" value="GDC-P_C"/>
</dbReference>
<dbReference type="InterPro" id="IPR049315">
    <property type="entry name" value="GDC-P_N"/>
</dbReference>
<dbReference type="InterPro" id="IPR020581">
    <property type="entry name" value="GDC_P"/>
</dbReference>
<dbReference type="InterPro" id="IPR015424">
    <property type="entry name" value="PyrdxlP-dep_Trfase"/>
</dbReference>
<dbReference type="InterPro" id="IPR015421">
    <property type="entry name" value="PyrdxlP-dep_Trfase_major"/>
</dbReference>
<dbReference type="InterPro" id="IPR015422">
    <property type="entry name" value="PyrdxlP-dep_Trfase_small"/>
</dbReference>
<dbReference type="NCBIfam" id="TIGR00461">
    <property type="entry name" value="gcvP"/>
    <property type="match status" value="1"/>
</dbReference>
<dbReference type="PANTHER" id="PTHR11773:SF1">
    <property type="entry name" value="GLYCINE DEHYDROGENASE (DECARBOXYLATING), MITOCHONDRIAL"/>
    <property type="match status" value="1"/>
</dbReference>
<dbReference type="PANTHER" id="PTHR11773">
    <property type="entry name" value="GLYCINE DEHYDROGENASE, DECARBOXYLATING"/>
    <property type="match status" value="1"/>
</dbReference>
<dbReference type="Pfam" id="PF21478">
    <property type="entry name" value="GcvP2_C"/>
    <property type="match status" value="1"/>
</dbReference>
<dbReference type="Pfam" id="PF02347">
    <property type="entry name" value="GDC-P"/>
    <property type="match status" value="2"/>
</dbReference>
<dbReference type="SUPFAM" id="SSF53383">
    <property type="entry name" value="PLP-dependent transferases"/>
    <property type="match status" value="2"/>
</dbReference>
<gene>
    <name evidence="1" type="primary">gcvP</name>
    <name type="ordered locus">Syncc9902_2188</name>
</gene>
<name>GCSP_SYNS9</name>
<proteinExistence type="inferred from homology"/>
<feature type="chain" id="PRO_1000045623" description="Glycine dehydrogenase (decarboxylating)">
    <location>
        <begin position="1"/>
        <end position="958"/>
    </location>
</feature>
<feature type="modified residue" description="N6-(pyridoxal phosphate)lysine" evidence="1">
    <location>
        <position position="705"/>
    </location>
</feature>
<comment type="function">
    <text evidence="1">The glycine cleavage system catalyzes the degradation of glycine. The P protein binds the alpha-amino group of glycine through its pyridoxal phosphate cofactor; CO(2) is released and the remaining methylamine moiety is then transferred to the lipoamide cofactor of the H protein.</text>
</comment>
<comment type="catalytic activity">
    <reaction evidence="1">
        <text>N(6)-[(R)-lipoyl]-L-lysyl-[glycine-cleavage complex H protein] + glycine + H(+) = N(6)-[(R)-S(8)-aminomethyldihydrolipoyl]-L-lysyl-[glycine-cleavage complex H protein] + CO2</text>
        <dbReference type="Rhea" id="RHEA:24304"/>
        <dbReference type="Rhea" id="RHEA-COMP:10494"/>
        <dbReference type="Rhea" id="RHEA-COMP:10495"/>
        <dbReference type="ChEBI" id="CHEBI:15378"/>
        <dbReference type="ChEBI" id="CHEBI:16526"/>
        <dbReference type="ChEBI" id="CHEBI:57305"/>
        <dbReference type="ChEBI" id="CHEBI:83099"/>
        <dbReference type="ChEBI" id="CHEBI:83143"/>
        <dbReference type="EC" id="1.4.4.2"/>
    </reaction>
</comment>
<comment type="cofactor">
    <cofactor evidence="1">
        <name>pyridoxal 5'-phosphate</name>
        <dbReference type="ChEBI" id="CHEBI:597326"/>
    </cofactor>
</comment>
<comment type="subunit">
    <text evidence="1">The glycine cleavage system is composed of four proteins: P, T, L and H.</text>
</comment>
<comment type="similarity">
    <text evidence="1">Belongs to the GcvP family.</text>
</comment>
<evidence type="ECO:0000255" key="1">
    <source>
        <dbReference type="HAMAP-Rule" id="MF_00711"/>
    </source>
</evidence>